<proteinExistence type="inferred from homology"/>
<evidence type="ECO:0000255" key="1">
    <source>
        <dbReference type="HAMAP-Rule" id="MF_01313"/>
    </source>
</evidence>
<keyword id="KW-0963">Cytoplasm</keyword>
<keyword id="KW-0274">FAD</keyword>
<keyword id="KW-0285">Flavoprotein</keyword>
<keyword id="KW-0520">NAD</keyword>
<keyword id="KW-0560">Oxidoreductase</keyword>
<keyword id="KW-1185">Reference proteome</keyword>
<dbReference type="EC" id="1.18.1.-" evidence="1"/>
<dbReference type="EMBL" id="CP000468">
    <property type="protein sequence ID" value="ABJ02141.1"/>
    <property type="molecule type" value="Genomic_DNA"/>
</dbReference>
<dbReference type="RefSeq" id="WP_000064713.1">
    <property type="nucleotide sequence ID" value="NZ_CADILS010000020.1"/>
</dbReference>
<dbReference type="SMR" id="A1AEQ1"/>
<dbReference type="KEGG" id="ecv:APECO1_3815"/>
<dbReference type="HOGENOM" id="CLU_003291_4_4_6"/>
<dbReference type="UniPathway" id="UPA00638"/>
<dbReference type="Proteomes" id="UP000008216">
    <property type="component" value="Chromosome"/>
</dbReference>
<dbReference type="GO" id="GO:0005737">
    <property type="term" value="C:cytoplasm"/>
    <property type="evidence" value="ECO:0007669"/>
    <property type="project" value="UniProtKB-SubCell"/>
</dbReference>
<dbReference type="GO" id="GO:0016731">
    <property type="term" value="F:oxidoreductase activity, acting on iron-sulfur proteins as donors, NAD or NADP as acceptor"/>
    <property type="evidence" value="ECO:0007669"/>
    <property type="project" value="UniProtKB-UniRule"/>
</dbReference>
<dbReference type="FunFam" id="3.30.390.120:FF:000001">
    <property type="entry name" value="Nitric oxide reductase FlRd-NAD(+) reductase"/>
    <property type="match status" value="1"/>
</dbReference>
<dbReference type="FunFam" id="3.50.50.60:FF:000075">
    <property type="entry name" value="Nitric oxide reductase FlRd-NAD(+) reductase"/>
    <property type="match status" value="1"/>
</dbReference>
<dbReference type="Gene3D" id="3.30.390.120">
    <property type="match status" value="1"/>
</dbReference>
<dbReference type="Gene3D" id="3.50.50.60">
    <property type="entry name" value="FAD/NAD(P)-binding domain"/>
    <property type="match status" value="2"/>
</dbReference>
<dbReference type="HAMAP" id="MF_01313">
    <property type="entry name" value="NorW"/>
    <property type="match status" value="1"/>
</dbReference>
<dbReference type="InterPro" id="IPR050260">
    <property type="entry name" value="FAD-bd_OxRdtase"/>
</dbReference>
<dbReference type="InterPro" id="IPR036188">
    <property type="entry name" value="FAD/NAD-bd_sf"/>
</dbReference>
<dbReference type="InterPro" id="IPR023753">
    <property type="entry name" value="FAD/NAD-binding_dom"/>
</dbReference>
<dbReference type="InterPro" id="IPR023961">
    <property type="entry name" value="NO_rdtase_NorW"/>
</dbReference>
<dbReference type="InterPro" id="IPR041364">
    <property type="entry name" value="Rbx-bd"/>
</dbReference>
<dbReference type="NCBIfam" id="NF003437">
    <property type="entry name" value="PRK04965.1"/>
    <property type="match status" value="1"/>
</dbReference>
<dbReference type="PANTHER" id="PTHR43429:SF3">
    <property type="entry name" value="NITRITE REDUCTASE [NAD(P)H]"/>
    <property type="match status" value="1"/>
</dbReference>
<dbReference type="PANTHER" id="PTHR43429">
    <property type="entry name" value="PYRIDINE NUCLEOTIDE-DISULFIDE OXIDOREDUCTASE DOMAIN-CONTAINING"/>
    <property type="match status" value="1"/>
</dbReference>
<dbReference type="Pfam" id="PF07992">
    <property type="entry name" value="Pyr_redox_2"/>
    <property type="match status" value="1"/>
</dbReference>
<dbReference type="Pfam" id="PF18113">
    <property type="entry name" value="Rbx_binding"/>
    <property type="match status" value="1"/>
</dbReference>
<dbReference type="PRINTS" id="PR00368">
    <property type="entry name" value="FADPNR"/>
</dbReference>
<dbReference type="PRINTS" id="PR00411">
    <property type="entry name" value="PNDRDTASEI"/>
</dbReference>
<dbReference type="SUPFAM" id="SSF51905">
    <property type="entry name" value="FAD/NAD(P)-binding domain"/>
    <property type="match status" value="1"/>
</dbReference>
<gene>
    <name evidence="1" type="primary">norW</name>
    <name evidence="1" type="synonym">flrR</name>
    <name type="ordered locus">Ecok1_26470</name>
    <name type="ORF">APECO1_3815</name>
</gene>
<organism>
    <name type="scientific">Escherichia coli O1:K1 / APEC</name>
    <dbReference type="NCBI Taxonomy" id="405955"/>
    <lineage>
        <taxon>Bacteria</taxon>
        <taxon>Pseudomonadati</taxon>
        <taxon>Pseudomonadota</taxon>
        <taxon>Gammaproteobacteria</taxon>
        <taxon>Enterobacterales</taxon>
        <taxon>Enterobacteriaceae</taxon>
        <taxon>Escherichia</taxon>
    </lineage>
</organism>
<protein>
    <recommendedName>
        <fullName evidence="1">Nitric oxide reductase FlRd-NAD(+) reductase</fullName>
        <ecNumber evidence="1">1.18.1.-</ecNumber>
    </recommendedName>
    <alternativeName>
        <fullName evidence="1">Flavorubredoxin reductase</fullName>
        <shortName evidence="1">FlRd-reductase</shortName>
        <shortName evidence="1">FlavoRb reductase</shortName>
    </alternativeName>
</protein>
<feature type="chain" id="PRO_0000305607" description="Nitric oxide reductase FlRd-NAD(+) reductase">
    <location>
        <begin position="1"/>
        <end position="377"/>
    </location>
</feature>
<name>NORW_ECOK1</name>
<accession>A1AEQ1</accession>
<comment type="function">
    <text evidence="1">One of at least two accessory proteins for anaerobic nitric oxide (NO) reductase. Reduces the rubredoxin moiety of NO reductase.</text>
</comment>
<comment type="catalytic activity">
    <reaction evidence="1">
        <text>2 reduced [nitric oxide reductase rubredoxin domain] + NAD(+) + H(+) = 2 oxidized [nitric oxide reductase rubredoxin domain] + NADH</text>
        <dbReference type="Rhea" id="RHEA:42960"/>
        <dbReference type="Rhea" id="RHEA-COMP:10304"/>
        <dbReference type="Rhea" id="RHEA-COMP:10305"/>
        <dbReference type="ChEBI" id="CHEBI:15378"/>
        <dbReference type="ChEBI" id="CHEBI:29033"/>
        <dbReference type="ChEBI" id="CHEBI:29034"/>
        <dbReference type="ChEBI" id="CHEBI:57540"/>
        <dbReference type="ChEBI" id="CHEBI:57945"/>
    </reaction>
</comment>
<comment type="cofactor">
    <cofactor evidence="1">
        <name>FAD</name>
        <dbReference type="ChEBI" id="CHEBI:57692"/>
    </cofactor>
</comment>
<comment type="pathway">
    <text evidence="1">Nitrogen metabolism; nitric oxide reduction.</text>
</comment>
<comment type="subcellular location">
    <subcellularLocation>
        <location evidence="1">Cytoplasm</location>
    </subcellularLocation>
</comment>
<comment type="similarity">
    <text evidence="1">Belongs to the FAD-dependent oxidoreductase family.</text>
</comment>
<reference key="1">
    <citation type="journal article" date="2007" name="J. Bacteriol.">
        <title>The genome sequence of avian pathogenic Escherichia coli strain O1:K1:H7 shares strong similarities with human extraintestinal pathogenic E. coli genomes.</title>
        <authorList>
            <person name="Johnson T.J."/>
            <person name="Kariyawasam S."/>
            <person name="Wannemuehler Y."/>
            <person name="Mangiamele P."/>
            <person name="Johnson S.J."/>
            <person name="Doetkott C."/>
            <person name="Skyberg J.A."/>
            <person name="Lynne A.M."/>
            <person name="Johnson J.R."/>
            <person name="Nolan L.K."/>
        </authorList>
    </citation>
    <scope>NUCLEOTIDE SEQUENCE [LARGE SCALE GENOMIC DNA]</scope>
</reference>
<sequence length="377" mass="41333">MSNGIVIIGSGFAARQLVKNIRKQDASIPLTLIAADSMDEYNKPDLSHVISQGQRADDLTRQTAGEFAEQFNLRLFPHTWVTDIDAEAHVVKSQNNQWQYDKLVLATGASAFVPPVPGRELMLTLNSQQEYRACETQLRDARRVLIVGGGLIGSELAMDFCRAGKAVTLIDNAASILASLMPPEVSSRLQHRLTEMGVHLLLKSQLQGLEKTDSGILATLDRQRCIEVDAVIAATGLRPETALARRAGLTINRGVCVDSYLQTSNADIYALGDCAEINGQVLPFLQPIQLSAMVLAKNLLGNNTPLKLPAMLVKIKTPELPLHLAGETQRQDLRWQINTERQGMVARGVDDADQLRAFVVSEDRMKEAFGLLKTLSM</sequence>